<feature type="chain" id="PRO_0000447799" description="Magnetosome protein MamG">
    <location>
        <begin position="1"/>
        <end position="84"/>
    </location>
</feature>
<feature type="topological domain" description="Cytoplasmic" evidence="6">
    <location>
        <begin position="1"/>
        <end position="3"/>
    </location>
</feature>
<feature type="transmembrane region" description="Helical" evidence="1">
    <location>
        <begin position="4"/>
        <end position="24"/>
    </location>
</feature>
<feature type="topological domain" description="Lumenal" evidence="6">
    <location>
        <begin position="25"/>
        <end position="40"/>
    </location>
</feature>
<feature type="transmembrane region" description="Helical" evidence="1">
    <location>
        <begin position="41"/>
        <end position="61"/>
    </location>
</feature>
<feature type="topological domain" description="Cytoplasmic" evidence="6">
    <location>
        <begin position="62"/>
        <end position="84"/>
    </location>
</feature>
<feature type="region of interest" description="LG repeat" evidence="6">
    <location>
        <begin position="41"/>
        <end position="48"/>
    </location>
</feature>
<comment type="function">
    <text evidence="3">Plays a role in regulating magnetite crystal size.</text>
</comment>
<comment type="subcellular location">
    <subcellularLocation>
        <location evidence="4">Magnetosome membrane</location>
        <topology evidence="1">Multi-pass membrane protein</topology>
    </subcellularLocation>
    <text evidence="4">Localizes as a filament-like structure in a straight line running through the center of the cell, in a position that corresponds to magnetosomes.</text>
</comment>
<comment type="induction">
    <text evidence="7 8">Part of the probable 4 gene mamGFDC operon.</text>
</comment>
<comment type="disruption phenotype">
    <text evidence="2 3">Deletion of any 2 genes encoded in this operon (mamC, mamD, mamF and mamG) decreases crystal size regardless of the protein combination. Deletion of the mamGFDC operon leads to smaller magnetite crystals in irregularly spaced chains, but no other phenotype (PubMed:17965152). Deletion of approximately 80 kb of DNA, including this operon, leads to cells that are non-magnetic, lack internal membrane systems, grow poorly, have reduced mobility and take-up and accumulate iron poorly (PubMed:13129949).</text>
</comment>
<comment type="miscellaneous">
    <text evidence="7">This bacteria makes up to 60 cubo-octahedral magnetosomes of about 45 nm in diameter which contain membrane-bound crystals of magnetite (Fe(3)O(4)).</text>
</comment>
<comment type="similarity">
    <text evidence="6">Belongs to the magnetosome MamG (TC 9.B.95) protein family.</text>
</comment>
<comment type="sequence caution" evidence="6">
    <conflict type="frameshift">
        <sequence resource="EMBL" id="HG794546"/>
    </conflict>
</comment>
<sequence>MIKGIAGVGGTALGVGGGVAAPPVSAAAVGSTLLAGKGVCLGLGLGLGAWGPVLLGVAGLACAASLCDYLKNRKAQAEASAEPA</sequence>
<reference key="1">
    <citation type="journal article" date="2003" name="J. Bacteriol.">
        <title>Characterization of a spontaneous nonmagnetic mutant of Magnetospirillum gryphiswaldense reveals a large deletion comprising a putative magnetosome island.</title>
        <authorList>
            <person name="Schuebbe S."/>
            <person name="Kube M."/>
            <person name="Scheffel A."/>
            <person name="Wawer C."/>
            <person name="Heyen U."/>
            <person name="Meyerdierks A."/>
            <person name="Madkour M.H."/>
            <person name="Mayer F."/>
            <person name="Reinhardt R."/>
            <person name="Schueler D."/>
        </authorList>
    </citation>
    <scope>NUCLEOTIDE SEQUENCE [GENOMIC DNA]</scope>
    <scope>PROBABLE OPERON</scope>
    <scope>DISRUPTION PHENOTYPE</scope>
    <source>
        <strain>DSM 6361 / JCM 21280 / NBRC 15271 / MSR-1</strain>
    </source>
</reference>
<reference key="2">
    <citation type="journal article" date="2005" name="J. Bacteriol.">
        <title>A hypervariable 130-kilobase genomic region of Magnetospirillum gryphiswaldense comprises a magnetosome island which undergoes frequent rearrangements during stationary growth.</title>
        <authorList>
            <person name="Ullrich S."/>
            <person name="Kube M."/>
            <person name="Schuebbe S."/>
            <person name="Reinhardt R."/>
            <person name="Schueler D."/>
        </authorList>
    </citation>
    <scope>NUCLEOTIDE SEQUENCE [GENOMIC DNA]</scope>
    <source>
        <strain>DSM 6361 / JCM 21280 / NBRC 15271 / MSR-1</strain>
    </source>
</reference>
<reference key="3">
    <citation type="journal article" date="2007" name="J. Bacteriol.">
        <title>Comparative genome analysis of four magnetotactic bacteria reveals a complex set of group-specific genes implicated in magnetosome biomineralization and function.</title>
        <authorList>
            <person name="Richter M."/>
            <person name="Kube M."/>
            <person name="Bazylinski D.A."/>
            <person name="Lombardot T."/>
            <person name="Gloeckner F.O."/>
            <person name="Reinhardt R."/>
            <person name="Schueler D."/>
        </authorList>
    </citation>
    <scope>NUCLEOTIDE SEQUENCE [LARGE SCALE GENOMIC DNA]</scope>
    <source>
        <strain>DSM 6361 / JCM 21280 / NBRC 15271 / MSR-1</strain>
    </source>
</reference>
<reference key="4">
    <citation type="journal article" date="2014" name="Genome Announc.">
        <title>Complete genome sequence of Magnetospirillum gryphiswaldense MSR-1.</title>
        <authorList>
            <person name="Wang X."/>
            <person name="Wang Q."/>
            <person name="Zhang W."/>
            <person name="Wang Y."/>
            <person name="Li L."/>
            <person name="Wen T."/>
            <person name="Zhang T."/>
            <person name="Zhang Y."/>
            <person name="Xu J."/>
            <person name="Hu J."/>
            <person name="Li S."/>
            <person name="Liu L."/>
            <person name="Liu J."/>
            <person name="Jiang W."/>
            <person name="Tian J."/>
            <person name="Li Y."/>
            <person name="Schuler D."/>
            <person name="Wang L."/>
            <person name="Li J."/>
        </authorList>
    </citation>
    <scope>NUCLEOTIDE SEQUENCE [LARGE SCALE GENOMIC DNA]</scope>
    <source>
        <strain>DSM 6361 / JCM 21280 / NBRC 15271 / MSR-1</strain>
    </source>
</reference>
<reference key="5">
    <citation type="journal article" date="2008" name="Appl. Environ. Microbiol.">
        <title>Expression of green fluorescent protein fused to magnetosome proteins in microaerophilic magnetotactic bacteria.</title>
        <authorList>
            <person name="Lang C."/>
            <person name="Schueler D."/>
        </authorList>
    </citation>
    <scope>SUBCELLULAR LOCATION</scope>
    <source>
        <strain>DSM 6361 / JCM 21280 / NBRC 15271 / MSR-1</strain>
    </source>
</reference>
<reference key="6">
    <citation type="journal article" date="2008" name="J. Bacteriol.">
        <title>The major magnetosome proteins MamGFDC are not essential for magnetite biomineralization in Magnetospirillum gryphiswaldense but regulate the size of magnetosome crystals.</title>
        <authorList>
            <person name="Scheffel A."/>
            <person name="Gaerdes A."/>
            <person name="Gruenberg K."/>
            <person name="Wanner G."/>
            <person name="Schueler D."/>
        </authorList>
    </citation>
    <scope>FUNCTION</scope>
    <scope>PROBABLE OPERON</scope>
    <scope>DISRUPTION PHENOTYPE</scope>
    <source>
        <strain>DSM 6361 / JCM 21280 / NBRC 15271 / MSR-1</strain>
    </source>
</reference>
<proteinExistence type="inferred from homology"/>
<keyword id="KW-0091">Biomineralization</keyword>
<keyword id="KW-1281">Magnetosome</keyword>
<keyword id="KW-0472">Membrane</keyword>
<keyword id="KW-1185">Reference proteome</keyword>
<keyword id="KW-0812">Transmembrane</keyword>
<keyword id="KW-1133">Transmembrane helix</keyword>
<evidence type="ECO:0000255" key="1"/>
<evidence type="ECO:0000269" key="2">
    <source>
    </source>
</evidence>
<evidence type="ECO:0000269" key="3">
    <source>
    </source>
</evidence>
<evidence type="ECO:0000269" key="4">
    <source>
    </source>
</evidence>
<evidence type="ECO:0000303" key="5">
    <source>
    </source>
</evidence>
<evidence type="ECO:0000305" key="6"/>
<evidence type="ECO:0000305" key="7">
    <source>
    </source>
</evidence>
<evidence type="ECO:0000305" key="8">
    <source>
    </source>
</evidence>
<name>MAMG_MAGGM</name>
<accession>Q6NE75</accession>
<organism>
    <name type="scientific">Magnetospirillum gryphiswaldense (strain DSM 6361 / JCM 21280 / NBRC 15271 / MSR-1)</name>
    <dbReference type="NCBI Taxonomy" id="431944"/>
    <lineage>
        <taxon>Bacteria</taxon>
        <taxon>Pseudomonadati</taxon>
        <taxon>Pseudomonadota</taxon>
        <taxon>Alphaproteobacteria</taxon>
        <taxon>Rhodospirillales</taxon>
        <taxon>Rhodospirillaceae</taxon>
        <taxon>Magnetospirillum</taxon>
    </lineage>
</organism>
<gene>
    <name evidence="5" type="primary">mamG</name>
    <name evidence="6" type="ordered locus">MGMSRv2__2395.1</name>
    <name type="ORF">mgIa15</name>
    <name type="ORF">MGR_4075</name>
</gene>
<dbReference type="EMBL" id="BX571797">
    <property type="protein sequence ID" value="CAE12018.1"/>
    <property type="molecule type" value="Genomic_DNA"/>
</dbReference>
<dbReference type="EMBL" id="AM085146">
    <property type="protein sequence ID" value="CAJ30098.1"/>
    <property type="molecule type" value="Genomic_DNA"/>
</dbReference>
<dbReference type="EMBL" id="CU459003">
    <property type="protein sequence ID" value="CAM78007.1"/>
    <property type="molecule type" value="Genomic_DNA"/>
</dbReference>
<dbReference type="EMBL" id="HG794546">
    <property type="status" value="NOT_ANNOTATED_CDS"/>
    <property type="molecule type" value="Genomic_DNA"/>
</dbReference>
<dbReference type="RefSeq" id="WP_199791966.1">
    <property type="nucleotide sequence ID" value="NZ_CP027526.1"/>
</dbReference>
<dbReference type="SMR" id="Q6NE75"/>
<dbReference type="TCDB" id="9.B.95.1.1">
    <property type="family name" value="the mamg (lg)4 repeat (mamg) family"/>
</dbReference>
<dbReference type="KEGG" id="mgry:MSR1_03190"/>
<dbReference type="Proteomes" id="UP000018922">
    <property type="component" value="Chromosome I"/>
</dbReference>
<dbReference type="GO" id="GO:0110146">
    <property type="term" value="C:magnetosome membrane"/>
    <property type="evidence" value="ECO:0000314"/>
    <property type="project" value="UniProtKB"/>
</dbReference>
<dbReference type="NCBIfam" id="NF040985">
    <property type="entry name" value="MamG"/>
    <property type="match status" value="1"/>
</dbReference>
<protein>
    <recommendedName>
        <fullName evidence="6">Magnetosome protein MamG</fullName>
    </recommendedName>
</protein>